<sequence length="125" mass="14450">MKHQKRVLKFNRSGSHRDAMVKNMMIALILNHIIKTTLSKAKILRQFIEPVITRAKINTIANRRLIFAKIRNTDSVIKLFTQIGPHFYDRPGGYTRILKCGFRKGDNAPMAYIELVDRSKLVIKS</sequence>
<comment type="subunit">
    <text evidence="1">Part of the 50S ribosomal subunit. Contacts protein L32.</text>
</comment>
<comment type="similarity">
    <text evidence="1">Belongs to the bacterial ribosomal protein bL17 family.</text>
</comment>
<organism>
    <name type="scientific">Blochmanniella floridana</name>
    <dbReference type="NCBI Taxonomy" id="203907"/>
    <lineage>
        <taxon>Bacteria</taxon>
        <taxon>Pseudomonadati</taxon>
        <taxon>Pseudomonadota</taxon>
        <taxon>Gammaproteobacteria</taxon>
        <taxon>Enterobacterales</taxon>
        <taxon>Enterobacteriaceae</taxon>
        <taxon>ant endosymbionts</taxon>
        <taxon>Candidatus Blochmanniella</taxon>
    </lineage>
</organism>
<feature type="chain" id="PRO_1000055775" description="Large ribosomal subunit protein bL17">
    <location>
        <begin position="1"/>
        <end position="125"/>
    </location>
</feature>
<protein>
    <recommendedName>
        <fullName evidence="1">Large ribosomal subunit protein bL17</fullName>
    </recommendedName>
    <alternativeName>
        <fullName evidence="2">50S ribosomal protein L17</fullName>
    </alternativeName>
</protein>
<evidence type="ECO:0000255" key="1">
    <source>
        <dbReference type="HAMAP-Rule" id="MF_01368"/>
    </source>
</evidence>
<evidence type="ECO:0000305" key="2"/>
<proteinExistence type="inferred from homology"/>
<accession>Q7VQC2</accession>
<dbReference type="EMBL" id="BX248583">
    <property type="protein sequence ID" value="CAD83732.1"/>
    <property type="molecule type" value="Genomic_DNA"/>
</dbReference>
<dbReference type="SMR" id="Q7VQC2"/>
<dbReference type="STRING" id="203907.Bfl217"/>
<dbReference type="KEGG" id="bfl:Bfl217"/>
<dbReference type="eggNOG" id="COG0203">
    <property type="taxonomic scope" value="Bacteria"/>
</dbReference>
<dbReference type="HOGENOM" id="CLU_074407_2_0_6"/>
<dbReference type="OrthoDB" id="9809073at2"/>
<dbReference type="Proteomes" id="UP000002192">
    <property type="component" value="Chromosome"/>
</dbReference>
<dbReference type="GO" id="GO:0022625">
    <property type="term" value="C:cytosolic large ribosomal subunit"/>
    <property type="evidence" value="ECO:0007669"/>
    <property type="project" value="TreeGrafter"/>
</dbReference>
<dbReference type="GO" id="GO:0003735">
    <property type="term" value="F:structural constituent of ribosome"/>
    <property type="evidence" value="ECO:0007669"/>
    <property type="project" value="InterPro"/>
</dbReference>
<dbReference type="GO" id="GO:0006412">
    <property type="term" value="P:translation"/>
    <property type="evidence" value="ECO:0007669"/>
    <property type="project" value="UniProtKB-UniRule"/>
</dbReference>
<dbReference type="FunFam" id="3.90.1030.10:FF:000001">
    <property type="entry name" value="50S ribosomal protein L17"/>
    <property type="match status" value="1"/>
</dbReference>
<dbReference type="Gene3D" id="3.90.1030.10">
    <property type="entry name" value="Ribosomal protein L17"/>
    <property type="match status" value="1"/>
</dbReference>
<dbReference type="HAMAP" id="MF_01368">
    <property type="entry name" value="Ribosomal_bL17"/>
    <property type="match status" value="1"/>
</dbReference>
<dbReference type="InterPro" id="IPR000456">
    <property type="entry name" value="Ribosomal_bL17"/>
</dbReference>
<dbReference type="InterPro" id="IPR047859">
    <property type="entry name" value="Ribosomal_bL17_CS"/>
</dbReference>
<dbReference type="InterPro" id="IPR036373">
    <property type="entry name" value="Ribosomal_bL17_sf"/>
</dbReference>
<dbReference type="NCBIfam" id="TIGR00059">
    <property type="entry name" value="L17"/>
    <property type="match status" value="1"/>
</dbReference>
<dbReference type="PANTHER" id="PTHR14413:SF16">
    <property type="entry name" value="LARGE RIBOSOMAL SUBUNIT PROTEIN BL17M"/>
    <property type="match status" value="1"/>
</dbReference>
<dbReference type="PANTHER" id="PTHR14413">
    <property type="entry name" value="RIBOSOMAL PROTEIN L17"/>
    <property type="match status" value="1"/>
</dbReference>
<dbReference type="Pfam" id="PF01196">
    <property type="entry name" value="Ribosomal_L17"/>
    <property type="match status" value="1"/>
</dbReference>
<dbReference type="SUPFAM" id="SSF64263">
    <property type="entry name" value="Prokaryotic ribosomal protein L17"/>
    <property type="match status" value="1"/>
</dbReference>
<dbReference type="PROSITE" id="PS01167">
    <property type="entry name" value="RIBOSOMAL_L17"/>
    <property type="match status" value="1"/>
</dbReference>
<gene>
    <name evidence="1" type="primary">rplQ</name>
    <name type="ordered locus">Bfl217</name>
</gene>
<name>RL17_BLOFL</name>
<reference key="1">
    <citation type="journal article" date="2003" name="Proc. Natl. Acad. Sci. U.S.A.">
        <title>The genome sequence of Blochmannia floridanus: comparative analysis of reduced genomes.</title>
        <authorList>
            <person name="Gil R."/>
            <person name="Silva F.J."/>
            <person name="Zientz E."/>
            <person name="Delmotte F."/>
            <person name="Gonzalez-Candelas F."/>
            <person name="Latorre A."/>
            <person name="Rausell C."/>
            <person name="Kamerbeek J."/>
            <person name="Gadau J."/>
            <person name="Hoelldobler B."/>
            <person name="van Ham R.C.H.J."/>
            <person name="Gross R."/>
            <person name="Moya A."/>
        </authorList>
    </citation>
    <scope>NUCLEOTIDE SEQUENCE [LARGE SCALE GENOMIC DNA]</scope>
</reference>
<keyword id="KW-1185">Reference proteome</keyword>
<keyword id="KW-0687">Ribonucleoprotein</keyword>
<keyword id="KW-0689">Ribosomal protein</keyword>